<comment type="function">
    <text evidence="1">Involved in iron-sulfur cluster biogenesis. Binds a 4Fe-4S cluster, can transfer this cluster to apoproteins, and thereby intervenes in the maturation of Fe/S proteins. Could also act as a scaffold/chaperone for damaged Fe/S proteins.</text>
</comment>
<comment type="cofactor">
    <cofactor evidence="1">
        <name>[4Fe-4S] cluster</name>
        <dbReference type="ChEBI" id="CHEBI:49883"/>
    </cofactor>
    <text evidence="1">Binds 1 [4Fe-4S] cluster per subunit. The cluster is presumably bound at the interface of two monomers.</text>
</comment>
<comment type="subunit">
    <text evidence="1">Homodimer.</text>
</comment>
<comment type="similarity">
    <text evidence="1">Belongs to the NfuA family.</text>
</comment>
<accession>A4ST19</accession>
<organism>
    <name type="scientific">Aeromonas salmonicida (strain A449)</name>
    <dbReference type="NCBI Taxonomy" id="382245"/>
    <lineage>
        <taxon>Bacteria</taxon>
        <taxon>Pseudomonadati</taxon>
        <taxon>Pseudomonadota</taxon>
        <taxon>Gammaproteobacteria</taxon>
        <taxon>Aeromonadales</taxon>
        <taxon>Aeromonadaceae</taxon>
        <taxon>Aeromonas</taxon>
    </lineage>
</organism>
<keyword id="KW-0004">4Fe-4S</keyword>
<keyword id="KW-0408">Iron</keyword>
<keyword id="KW-0411">Iron-sulfur</keyword>
<keyword id="KW-0479">Metal-binding</keyword>
<name>NFUA_AERS4</name>
<protein>
    <recommendedName>
        <fullName evidence="1">Fe/S biogenesis protein NfuA</fullName>
    </recommendedName>
</protein>
<evidence type="ECO:0000255" key="1">
    <source>
        <dbReference type="HAMAP-Rule" id="MF_01637"/>
    </source>
</evidence>
<gene>
    <name evidence="1" type="primary">nfuA</name>
    <name type="ordered locus">ASA_4100</name>
</gene>
<dbReference type="EMBL" id="CP000644">
    <property type="protein sequence ID" value="ABO92041.1"/>
    <property type="molecule type" value="Genomic_DNA"/>
</dbReference>
<dbReference type="RefSeq" id="WP_005319803.1">
    <property type="nucleotide sequence ID" value="NC_009348.1"/>
</dbReference>
<dbReference type="SMR" id="A4ST19"/>
<dbReference type="STRING" id="29491.GCA_000820065_03453"/>
<dbReference type="KEGG" id="asa:ASA_4100"/>
<dbReference type="PATRIC" id="fig|382245.13.peg.4068"/>
<dbReference type="eggNOG" id="COG0316">
    <property type="taxonomic scope" value="Bacteria"/>
</dbReference>
<dbReference type="eggNOG" id="COG0694">
    <property type="taxonomic scope" value="Bacteria"/>
</dbReference>
<dbReference type="HOGENOM" id="CLU_094569_0_0_6"/>
<dbReference type="Proteomes" id="UP000000225">
    <property type="component" value="Chromosome"/>
</dbReference>
<dbReference type="GO" id="GO:0051539">
    <property type="term" value="F:4 iron, 4 sulfur cluster binding"/>
    <property type="evidence" value="ECO:0007669"/>
    <property type="project" value="UniProtKB-UniRule"/>
</dbReference>
<dbReference type="GO" id="GO:0005506">
    <property type="term" value="F:iron ion binding"/>
    <property type="evidence" value="ECO:0007669"/>
    <property type="project" value="InterPro"/>
</dbReference>
<dbReference type="GO" id="GO:0016226">
    <property type="term" value="P:iron-sulfur cluster assembly"/>
    <property type="evidence" value="ECO:0007669"/>
    <property type="project" value="UniProtKB-UniRule"/>
</dbReference>
<dbReference type="GO" id="GO:0051604">
    <property type="term" value="P:protein maturation"/>
    <property type="evidence" value="ECO:0007669"/>
    <property type="project" value="UniProtKB-UniRule"/>
</dbReference>
<dbReference type="Gene3D" id="3.30.300.130">
    <property type="entry name" value="Fe-S cluster assembly (FSCA)"/>
    <property type="match status" value="1"/>
</dbReference>
<dbReference type="Gene3D" id="2.60.300.12">
    <property type="entry name" value="HesB-like domain"/>
    <property type="match status" value="1"/>
</dbReference>
<dbReference type="HAMAP" id="MF_01637">
    <property type="entry name" value="Fe_S_biogen_NfuA"/>
    <property type="match status" value="1"/>
</dbReference>
<dbReference type="InterPro" id="IPR017726">
    <property type="entry name" value="Fe/S_biogenesis_protein_NfuA"/>
</dbReference>
<dbReference type="InterPro" id="IPR000361">
    <property type="entry name" value="FeS_biogenesis"/>
</dbReference>
<dbReference type="InterPro" id="IPR034904">
    <property type="entry name" value="FSCA_dom_sf"/>
</dbReference>
<dbReference type="InterPro" id="IPR035903">
    <property type="entry name" value="HesB-like_dom_sf"/>
</dbReference>
<dbReference type="InterPro" id="IPR001075">
    <property type="entry name" value="NIF_FeS_clus_asmbl_NifU_C"/>
</dbReference>
<dbReference type="NCBIfam" id="NF008392">
    <property type="entry name" value="PRK11190.1"/>
    <property type="match status" value="1"/>
</dbReference>
<dbReference type="NCBIfam" id="TIGR03341">
    <property type="entry name" value="YhgI_GntY"/>
    <property type="match status" value="1"/>
</dbReference>
<dbReference type="PANTHER" id="PTHR11178:SF51">
    <property type="entry name" value="FE_S BIOGENESIS PROTEIN NFUA"/>
    <property type="match status" value="1"/>
</dbReference>
<dbReference type="PANTHER" id="PTHR11178">
    <property type="entry name" value="IRON-SULFUR CLUSTER SCAFFOLD PROTEIN NFU-RELATED"/>
    <property type="match status" value="1"/>
</dbReference>
<dbReference type="Pfam" id="PF01521">
    <property type="entry name" value="Fe-S_biosyn"/>
    <property type="match status" value="1"/>
</dbReference>
<dbReference type="Pfam" id="PF01106">
    <property type="entry name" value="NifU"/>
    <property type="match status" value="1"/>
</dbReference>
<dbReference type="SUPFAM" id="SSF117916">
    <property type="entry name" value="Fe-S cluster assembly (FSCA) domain-like"/>
    <property type="match status" value="1"/>
</dbReference>
<dbReference type="SUPFAM" id="SSF89360">
    <property type="entry name" value="HesB-like domain"/>
    <property type="match status" value="1"/>
</dbReference>
<reference key="1">
    <citation type="journal article" date="2008" name="BMC Genomics">
        <title>The genome of Aeromonas salmonicida subsp. salmonicida A449: insights into the evolution of a fish pathogen.</title>
        <authorList>
            <person name="Reith M.E."/>
            <person name="Singh R.K."/>
            <person name="Curtis B."/>
            <person name="Boyd J.M."/>
            <person name="Bouevitch A."/>
            <person name="Kimball J."/>
            <person name="Munholland J."/>
            <person name="Murphy C."/>
            <person name="Sarty D."/>
            <person name="Williams J."/>
            <person name="Nash J.H."/>
            <person name="Johnson S.C."/>
            <person name="Brown L.L."/>
        </authorList>
    </citation>
    <scope>NUCLEOTIDE SEQUENCE [LARGE SCALE GENOMIC DNA]</scope>
    <source>
        <strain>A449</strain>
    </source>
</reference>
<feature type="chain" id="PRO_0000292088" description="Fe/S biogenesis protein NfuA">
    <location>
        <begin position="1"/>
        <end position="192"/>
    </location>
</feature>
<feature type="binding site" evidence="1">
    <location>
        <position position="149"/>
    </location>
    <ligand>
        <name>[4Fe-4S] cluster</name>
        <dbReference type="ChEBI" id="CHEBI:49883"/>
    </ligand>
</feature>
<feature type="binding site" evidence="1">
    <location>
        <position position="152"/>
    </location>
    <ligand>
        <name>[4Fe-4S] cluster</name>
        <dbReference type="ChEBI" id="CHEBI:49883"/>
    </ligand>
</feature>
<sequence>MISISDTAQAHFRKLLKKQPDGTNIRVFVVNPGTQNAECGVSYCPPDAVDPEDQHLPFSGFDCLVDPLSAPYLVDATIDFVTDQMGSQLTLKAPNAKMRKVADDAPLIDRIEYVLMSEVNPMLAGHGGKVTLVELTEDKLAILQFGGGCNGCSMVDYTLKEGIEKQLLEKFPGELNGVKDATEHQRGDHSYY</sequence>
<proteinExistence type="inferred from homology"/>